<comment type="function">
    <text evidence="1">Binds the lower part of the 30S subunit head. Binds mRNA in the 70S ribosome, positioning it for translation.</text>
</comment>
<comment type="subunit">
    <text evidence="1">Part of the 30S ribosomal subunit. Forms a tight complex with proteins S10 and S14.</text>
</comment>
<comment type="similarity">
    <text evidence="1">Belongs to the universal ribosomal protein uS3 family.</text>
</comment>
<sequence length="299" mass="33043">MGQKIHPVGFRLPVTRNWSSRWYASNRNFATMLAEDLKVREYLKAKLKSAAVSRILIERPAKNARITIYSARPGVVIGKKGEDIENLKAELTRRLGVPVAVNIEEVRKPEIDAQLIADSITQQLEKRIMFRRAMKRAMQNAMRLGAQGIKIMSAGRLNGIEIARTEWYREGRVPLHTLRADIDYGFSEAKTTYGIIGVKVWVYRGDRLANGEAPVIKTDEREDDRRNRRGPRSDRPAGDRRPPSRDGARPGPRGPRADAGAAAPTDKPADGAAPAAADGPKAAVKRVRKAVAPGDAKGE</sequence>
<reference key="1">
    <citation type="journal article" date="2007" name="J. Bacteriol.">
        <title>Whole-genome analysis of the methyl tert-butyl ether-degrading beta-proteobacterium Methylibium petroleiphilum PM1.</title>
        <authorList>
            <person name="Kane S.R."/>
            <person name="Chakicherla A.Y."/>
            <person name="Chain P.S.G."/>
            <person name="Schmidt R."/>
            <person name="Shin M.W."/>
            <person name="Legler T.C."/>
            <person name="Scow K.M."/>
            <person name="Larimer F.W."/>
            <person name="Lucas S.M."/>
            <person name="Richardson P.M."/>
            <person name="Hristova K.R."/>
        </authorList>
    </citation>
    <scope>NUCLEOTIDE SEQUENCE [LARGE SCALE GENOMIC DNA]</scope>
    <source>
        <strain>ATCC BAA-1232 / LMG 22953 / PM1</strain>
    </source>
</reference>
<keyword id="KW-1185">Reference proteome</keyword>
<keyword id="KW-0687">Ribonucleoprotein</keyword>
<keyword id="KW-0689">Ribosomal protein</keyword>
<keyword id="KW-0694">RNA-binding</keyword>
<keyword id="KW-0699">rRNA-binding</keyword>
<accession>A2SLF1</accession>
<dbReference type="EMBL" id="CP000555">
    <property type="protein sequence ID" value="ABM96390.1"/>
    <property type="molecule type" value="Genomic_DNA"/>
</dbReference>
<dbReference type="RefSeq" id="WP_011831011.1">
    <property type="nucleotide sequence ID" value="NC_008825.1"/>
</dbReference>
<dbReference type="SMR" id="A2SLF1"/>
<dbReference type="STRING" id="420662.Mpe_A3437"/>
<dbReference type="KEGG" id="mpt:Mpe_A3437"/>
<dbReference type="eggNOG" id="COG0092">
    <property type="taxonomic scope" value="Bacteria"/>
</dbReference>
<dbReference type="HOGENOM" id="CLU_058591_0_2_4"/>
<dbReference type="Proteomes" id="UP000000366">
    <property type="component" value="Chromosome"/>
</dbReference>
<dbReference type="GO" id="GO:0022627">
    <property type="term" value="C:cytosolic small ribosomal subunit"/>
    <property type="evidence" value="ECO:0007669"/>
    <property type="project" value="TreeGrafter"/>
</dbReference>
<dbReference type="GO" id="GO:0003729">
    <property type="term" value="F:mRNA binding"/>
    <property type="evidence" value="ECO:0007669"/>
    <property type="project" value="UniProtKB-UniRule"/>
</dbReference>
<dbReference type="GO" id="GO:0019843">
    <property type="term" value="F:rRNA binding"/>
    <property type="evidence" value="ECO:0007669"/>
    <property type="project" value="UniProtKB-UniRule"/>
</dbReference>
<dbReference type="GO" id="GO:0003735">
    <property type="term" value="F:structural constituent of ribosome"/>
    <property type="evidence" value="ECO:0007669"/>
    <property type="project" value="InterPro"/>
</dbReference>
<dbReference type="GO" id="GO:0006412">
    <property type="term" value="P:translation"/>
    <property type="evidence" value="ECO:0007669"/>
    <property type="project" value="UniProtKB-UniRule"/>
</dbReference>
<dbReference type="CDD" id="cd02412">
    <property type="entry name" value="KH-II_30S_S3"/>
    <property type="match status" value="1"/>
</dbReference>
<dbReference type="FunFam" id="3.30.1140.32:FF:000006">
    <property type="entry name" value="30S ribosomal protein S3"/>
    <property type="match status" value="1"/>
</dbReference>
<dbReference type="FunFam" id="3.30.300.20:FF:000001">
    <property type="entry name" value="30S ribosomal protein S3"/>
    <property type="match status" value="1"/>
</dbReference>
<dbReference type="Gene3D" id="3.30.300.20">
    <property type="match status" value="1"/>
</dbReference>
<dbReference type="Gene3D" id="3.30.1140.32">
    <property type="entry name" value="Ribosomal protein S3, C-terminal domain"/>
    <property type="match status" value="1"/>
</dbReference>
<dbReference type="HAMAP" id="MF_01309_B">
    <property type="entry name" value="Ribosomal_uS3_B"/>
    <property type="match status" value="1"/>
</dbReference>
<dbReference type="InterPro" id="IPR004087">
    <property type="entry name" value="KH_dom"/>
</dbReference>
<dbReference type="InterPro" id="IPR015946">
    <property type="entry name" value="KH_dom-like_a/b"/>
</dbReference>
<dbReference type="InterPro" id="IPR004044">
    <property type="entry name" value="KH_dom_type_2"/>
</dbReference>
<dbReference type="InterPro" id="IPR009019">
    <property type="entry name" value="KH_sf_prok-type"/>
</dbReference>
<dbReference type="InterPro" id="IPR036419">
    <property type="entry name" value="Ribosomal_S3_C_sf"/>
</dbReference>
<dbReference type="InterPro" id="IPR005704">
    <property type="entry name" value="Ribosomal_uS3_bac-typ"/>
</dbReference>
<dbReference type="InterPro" id="IPR001351">
    <property type="entry name" value="Ribosomal_uS3_C"/>
</dbReference>
<dbReference type="InterPro" id="IPR018280">
    <property type="entry name" value="Ribosomal_uS3_CS"/>
</dbReference>
<dbReference type="NCBIfam" id="TIGR01009">
    <property type="entry name" value="rpsC_bact"/>
    <property type="match status" value="1"/>
</dbReference>
<dbReference type="PANTHER" id="PTHR11760">
    <property type="entry name" value="30S/40S RIBOSOMAL PROTEIN S3"/>
    <property type="match status" value="1"/>
</dbReference>
<dbReference type="PANTHER" id="PTHR11760:SF19">
    <property type="entry name" value="SMALL RIBOSOMAL SUBUNIT PROTEIN US3C"/>
    <property type="match status" value="1"/>
</dbReference>
<dbReference type="Pfam" id="PF07650">
    <property type="entry name" value="KH_2"/>
    <property type="match status" value="1"/>
</dbReference>
<dbReference type="Pfam" id="PF00189">
    <property type="entry name" value="Ribosomal_S3_C"/>
    <property type="match status" value="1"/>
</dbReference>
<dbReference type="SMART" id="SM00322">
    <property type="entry name" value="KH"/>
    <property type="match status" value="1"/>
</dbReference>
<dbReference type="SUPFAM" id="SSF54814">
    <property type="entry name" value="Prokaryotic type KH domain (KH-domain type II)"/>
    <property type="match status" value="1"/>
</dbReference>
<dbReference type="SUPFAM" id="SSF54821">
    <property type="entry name" value="Ribosomal protein S3 C-terminal domain"/>
    <property type="match status" value="1"/>
</dbReference>
<dbReference type="PROSITE" id="PS50823">
    <property type="entry name" value="KH_TYPE_2"/>
    <property type="match status" value="1"/>
</dbReference>
<dbReference type="PROSITE" id="PS00548">
    <property type="entry name" value="RIBOSOMAL_S3"/>
    <property type="match status" value="1"/>
</dbReference>
<feature type="chain" id="PRO_0000293824" description="Small ribosomal subunit protein uS3">
    <location>
        <begin position="1"/>
        <end position="299"/>
    </location>
</feature>
<feature type="domain" description="KH type-2" evidence="1">
    <location>
        <begin position="39"/>
        <end position="107"/>
    </location>
</feature>
<feature type="region of interest" description="Disordered" evidence="2">
    <location>
        <begin position="214"/>
        <end position="299"/>
    </location>
</feature>
<feature type="compositionally biased region" description="Basic and acidic residues" evidence="2">
    <location>
        <begin position="217"/>
        <end position="248"/>
    </location>
</feature>
<feature type="compositionally biased region" description="Low complexity" evidence="2">
    <location>
        <begin position="257"/>
        <end position="282"/>
    </location>
</feature>
<gene>
    <name evidence="1" type="primary">rpsC</name>
    <name type="ordered locus">Mpe_A3437</name>
</gene>
<organism>
    <name type="scientific">Methylibium petroleiphilum (strain ATCC BAA-1232 / LMG 22953 / PM1)</name>
    <dbReference type="NCBI Taxonomy" id="420662"/>
    <lineage>
        <taxon>Bacteria</taxon>
        <taxon>Pseudomonadati</taxon>
        <taxon>Pseudomonadota</taxon>
        <taxon>Betaproteobacteria</taxon>
        <taxon>Burkholderiales</taxon>
        <taxon>Sphaerotilaceae</taxon>
        <taxon>Methylibium</taxon>
    </lineage>
</organism>
<evidence type="ECO:0000255" key="1">
    <source>
        <dbReference type="HAMAP-Rule" id="MF_01309"/>
    </source>
</evidence>
<evidence type="ECO:0000256" key="2">
    <source>
        <dbReference type="SAM" id="MobiDB-lite"/>
    </source>
</evidence>
<evidence type="ECO:0000305" key="3"/>
<name>RS3_METPP</name>
<proteinExistence type="inferred from homology"/>
<protein>
    <recommendedName>
        <fullName evidence="1">Small ribosomal subunit protein uS3</fullName>
    </recommendedName>
    <alternativeName>
        <fullName evidence="3">30S ribosomal protein S3</fullName>
    </alternativeName>
</protein>